<reference key="1">
    <citation type="submission" date="2005-08" db="EMBL/GenBank/DDBJ databases">
        <title>Complete sequence of Pelodictyon luteolum DSM 273.</title>
        <authorList>
            <consortium name="US DOE Joint Genome Institute"/>
            <person name="Copeland A."/>
            <person name="Lucas S."/>
            <person name="Lapidus A."/>
            <person name="Barry K."/>
            <person name="Detter J.C."/>
            <person name="Glavina T."/>
            <person name="Hammon N."/>
            <person name="Israni S."/>
            <person name="Pitluck S."/>
            <person name="Bryant D."/>
            <person name="Schmutz J."/>
            <person name="Larimer F."/>
            <person name="Land M."/>
            <person name="Kyrpides N."/>
            <person name="Ivanova N."/>
            <person name="Richardson P."/>
        </authorList>
    </citation>
    <scope>NUCLEOTIDE SEQUENCE [LARGE SCALE GENOMIC DNA]</scope>
    <source>
        <strain>DSM 273 / BCRC 81028 / 2530</strain>
    </source>
</reference>
<proteinExistence type="inferred from homology"/>
<name>Y598_CHLL3</name>
<gene>
    <name type="ordered locus">Plut_0598</name>
</gene>
<evidence type="ECO:0000255" key="1">
    <source>
        <dbReference type="PROSITE-ProRule" id="PRU01182"/>
    </source>
</evidence>
<evidence type="ECO:0000305" key="2"/>
<accession>Q3B5A0</accession>
<sequence length="223" mass="24917">MRIHDLDPENRPRERFLSSGPSALSSAELLALVLRSGTRHLNIVDTCQRIIAENGLERLASMTLGELQKTPGIGQAKAMQIVAIFELNNRLHHTRNTNRRVQGAKDVFEYMSGRIPDETQEHLFVLHLNTKNQVTKCVRVTVGTLNASLIHPREVFKSAIRESAHAIILVHNHPSGDTEPSNADRQVTTLLKQASAVIQIDLLDHVIIGKTSWFSFRESNLLG</sequence>
<organism>
    <name type="scientific">Chlorobium luteolum (strain DSM 273 / BCRC 81028 / 2530)</name>
    <name type="common">Pelodictyon luteolum</name>
    <dbReference type="NCBI Taxonomy" id="319225"/>
    <lineage>
        <taxon>Bacteria</taxon>
        <taxon>Pseudomonadati</taxon>
        <taxon>Chlorobiota</taxon>
        <taxon>Chlorobiia</taxon>
        <taxon>Chlorobiales</taxon>
        <taxon>Chlorobiaceae</taxon>
        <taxon>Chlorobium/Pelodictyon group</taxon>
        <taxon>Pelodictyon</taxon>
    </lineage>
</organism>
<comment type="similarity">
    <text evidence="2">Belongs to the UPF0758 family.</text>
</comment>
<dbReference type="EMBL" id="CP000096">
    <property type="protein sequence ID" value="ABB23481.1"/>
    <property type="molecule type" value="Genomic_DNA"/>
</dbReference>
<dbReference type="RefSeq" id="WP_011357356.1">
    <property type="nucleotide sequence ID" value="NC_007512.1"/>
</dbReference>
<dbReference type="SMR" id="Q3B5A0"/>
<dbReference type="STRING" id="319225.Plut_0598"/>
<dbReference type="KEGG" id="plt:Plut_0598"/>
<dbReference type="eggNOG" id="COG2003">
    <property type="taxonomic scope" value="Bacteria"/>
</dbReference>
<dbReference type="HOGENOM" id="CLU_073529_0_2_10"/>
<dbReference type="OrthoDB" id="9804482at2"/>
<dbReference type="Proteomes" id="UP000002709">
    <property type="component" value="Chromosome"/>
</dbReference>
<dbReference type="GO" id="GO:0046872">
    <property type="term" value="F:metal ion binding"/>
    <property type="evidence" value="ECO:0007669"/>
    <property type="project" value="UniProtKB-KW"/>
</dbReference>
<dbReference type="GO" id="GO:0008237">
    <property type="term" value="F:metallopeptidase activity"/>
    <property type="evidence" value="ECO:0007669"/>
    <property type="project" value="UniProtKB-KW"/>
</dbReference>
<dbReference type="GO" id="GO:0006508">
    <property type="term" value="P:proteolysis"/>
    <property type="evidence" value="ECO:0007669"/>
    <property type="project" value="UniProtKB-KW"/>
</dbReference>
<dbReference type="CDD" id="cd08071">
    <property type="entry name" value="MPN_DUF2466"/>
    <property type="match status" value="1"/>
</dbReference>
<dbReference type="Gene3D" id="3.40.140.10">
    <property type="entry name" value="Cytidine Deaminase, domain 2"/>
    <property type="match status" value="1"/>
</dbReference>
<dbReference type="InterPro" id="IPR037518">
    <property type="entry name" value="MPN"/>
</dbReference>
<dbReference type="InterPro" id="IPR025657">
    <property type="entry name" value="RadC_JAB"/>
</dbReference>
<dbReference type="InterPro" id="IPR010994">
    <property type="entry name" value="RuvA_2-like"/>
</dbReference>
<dbReference type="InterPro" id="IPR001405">
    <property type="entry name" value="UPF0758"/>
</dbReference>
<dbReference type="InterPro" id="IPR020891">
    <property type="entry name" value="UPF0758_CS"/>
</dbReference>
<dbReference type="InterPro" id="IPR046778">
    <property type="entry name" value="UPF0758_N"/>
</dbReference>
<dbReference type="NCBIfam" id="NF000642">
    <property type="entry name" value="PRK00024.1"/>
    <property type="match status" value="1"/>
</dbReference>
<dbReference type="NCBIfam" id="TIGR00608">
    <property type="entry name" value="radc"/>
    <property type="match status" value="1"/>
</dbReference>
<dbReference type="PANTHER" id="PTHR30471">
    <property type="entry name" value="DNA REPAIR PROTEIN RADC"/>
    <property type="match status" value="1"/>
</dbReference>
<dbReference type="PANTHER" id="PTHR30471:SF3">
    <property type="entry name" value="UPF0758 PROTEIN YEES-RELATED"/>
    <property type="match status" value="1"/>
</dbReference>
<dbReference type="Pfam" id="PF04002">
    <property type="entry name" value="RadC"/>
    <property type="match status" value="1"/>
</dbReference>
<dbReference type="Pfam" id="PF20582">
    <property type="entry name" value="UPF0758_N"/>
    <property type="match status" value="1"/>
</dbReference>
<dbReference type="SUPFAM" id="SSF102712">
    <property type="entry name" value="JAB1/MPN domain"/>
    <property type="match status" value="1"/>
</dbReference>
<dbReference type="SUPFAM" id="SSF47781">
    <property type="entry name" value="RuvA domain 2-like"/>
    <property type="match status" value="1"/>
</dbReference>
<dbReference type="PROSITE" id="PS50249">
    <property type="entry name" value="MPN"/>
    <property type="match status" value="1"/>
</dbReference>
<dbReference type="PROSITE" id="PS01302">
    <property type="entry name" value="UPF0758"/>
    <property type="match status" value="1"/>
</dbReference>
<keyword id="KW-0378">Hydrolase</keyword>
<keyword id="KW-0479">Metal-binding</keyword>
<keyword id="KW-0482">Metalloprotease</keyword>
<keyword id="KW-0645">Protease</keyword>
<keyword id="KW-1185">Reference proteome</keyword>
<keyword id="KW-0862">Zinc</keyword>
<feature type="chain" id="PRO_1000089829" description="UPF0758 protein Plut_0598">
    <location>
        <begin position="1"/>
        <end position="223"/>
    </location>
</feature>
<feature type="domain" description="MPN" evidence="1">
    <location>
        <begin position="100"/>
        <end position="222"/>
    </location>
</feature>
<feature type="short sequence motif" description="JAMM motif" evidence="1">
    <location>
        <begin position="171"/>
        <end position="184"/>
    </location>
</feature>
<feature type="binding site" evidence="1">
    <location>
        <position position="171"/>
    </location>
    <ligand>
        <name>Zn(2+)</name>
        <dbReference type="ChEBI" id="CHEBI:29105"/>
        <note>catalytic</note>
    </ligand>
</feature>
<feature type="binding site" evidence="1">
    <location>
        <position position="173"/>
    </location>
    <ligand>
        <name>Zn(2+)</name>
        <dbReference type="ChEBI" id="CHEBI:29105"/>
        <note>catalytic</note>
    </ligand>
</feature>
<feature type="binding site" evidence="1">
    <location>
        <position position="184"/>
    </location>
    <ligand>
        <name>Zn(2+)</name>
        <dbReference type="ChEBI" id="CHEBI:29105"/>
        <note>catalytic</note>
    </ligand>
</feature>
<protein>
    <recommendedName>
        <fullName>UPF0758 protein Plut_0598</fullName>
    </recommendedName>
</protein>